<keyword id="KW-0131">Cell cycle</keyword>
<keyword id="KW-0539">Nucleus</keyword>
<keyword id="KW-1185">Reference proteome</keyword>
<keyword id="KW-0678">Repressor</keyword>
<keyword id="KW-0804">Transcription</keyword>
<keyword id="KW-0805">Transcription regulation</keyword>
<feature type="chain" id="PRO_0000380244" description="Retinoblastoma-related protein 1">
    <location>
        <begin position="1"/>
        <end position="957"/>
    </location>
</feature>
<feature type="region of interest" description="Pocket" evidence="1">
    <location>
        <begin position="369"/>
        <end position="808"/>
    </location>
</feature>
<feature type="region of interest" description="Domain A" evidence="1">
    <location>
        <begin position="369"/>
        <end position="569"/>
    </location>
</feature>
<feature type="region of interest" description="Spacer" evidence="1">
    <location>
        <begin position="570"/>
        <end position="677"/>
    </location>
</feature>
<feature type="region of interest" description="Domain B" evidence="1">
    <location>
        <begin position="678"/>
        <end position="808"/>
    </location>
</feature>
<feature type="region of interest" description="Disordered" evidence="2">
    <location>
        <begin position="814"/>
        <end position="854"/>
    </location>
</feature>
<accession>A9UL13</accession>
<protein>
    <recommendedName>
        <fullName>Retinoblastoma-related protein 1</fullName>
        <shortName>TaRBR1</shortName>
    </recommendedName>
</protein>
<name>RBR1_WHEAT</name>
<dbReference type="EMBL" id="AY941772">
    <property type="protein sequence ID" value="AAY23366.1"/>
    <property type="molecule type" value="mRNA"/>
</dbReference>
<dbReference type="SMR" id="A9UL13"/>
<dbReference type="STRING" id="4565.A9UL13"/>
<dbReference type="PaxDb" id="4565-Traes_7DS_B0D50DF2A.2"/>
<dbReference type="eggNOG" id="KOG1010">
    <property type="taxonomic scope" value="Eukaryota"/>
</dbReference>
<dbReference type="Proteomes" id="UP000019116">
    <property type="component" value="Unplaced"/>
</dbReference>
<dbReference type="ExpressionAtlas" id="A9UL13">
    <property type="expression patterns" value="baseline and differential"/>
</dbReference>
<dbReference type="GO" id="GO:0000785">
    <property type="term" value="C:chromatin"/>
    <property type="evidence" value="ECO:0000318"/>
    <property type="project" value="GO_Central"/>
</dbReference>
<dbReference type="GO" id="GO:0005634">
    <property type="term" value="C:nucleus"/>
    <property type="evidence" value="ECO:0007669"/>
    <property type="project" value="UniProtKB-SubCell"/>
</dbReference>
<dbReference type="GO" id="GO:0005667">
    <property type="term" value="C:transcription regulator complex"/>
    <property type="evidence" value="ECO:0000318"/>
    <property type="project" value="GO_Central"/>
</dbReference>
<dbReference type="GO" id="GO:0000977">
    <property type="term" value="F:RNA polymerase II transcription regulatory region sequence-specific DNA binding"/>
    <property type="evidence" value="ECO:0000318"/>
    <property type="project" value="GO_Central"/>
</dbReference>
<dbReference type="GO" id="GO:0030154">
    <property type="term" value="P:cell differentiation"/>
    <property type="evidence" value="ECO:0000318"/>
    <property type="project" value="GO_Central"/>
</dbReference>
<dbReference type="GO" id="GO:2000134">
    <property type="term" value="P:negative regulation of G1/S transition of mitotic cell cycle"/>
    <property type="evidence" value="ECO:0000318"/>
    <property type="project" value="GO_Central"/>
</dbReference>
<dbReference type="GO" id="GO:0006357">
    <property type="term" value="P:regulation of transcription by RNA polymerase II"/>
    <property type="evidence" value="ECO:0007669"/>
    <property type="project" value="InterPro"/>
</dbReference>
<dbReference type="FunFam" id="1.10.472.10:FF:000030">
    <property type="entry name" value="Retinoblastoma-related protein 1"/>
    <property type="match status" value="1"/>
</dbReference>
<dbReference type="FunFam" id="1.10.472.10:FF:000067">
    <property type="entry name" value="Retinoblastoma-related protein 1"/>
    <property type="match status" value="1"/>
</dbReference>
<dbReference type="FunFam" id="1.10.472.140:FF:000003">
    <property type="entry name" value="Retinoblastoma-related protein 1"/>
    <property type="match status" value="1"/>
</dbReference>
<dbReference type="Gene3D" id="1.10.472.140">
    <property type="match status" value="1"/>
</dbReference>
<dbReference type="Gene3D" id="1.10.472.10">
    <property type="entry name" value="Cyclin-like"/>
    <property type="match status" value="2"/>
</dbReference>
<dbReference type="InterPro" id="IPR036915">
    <property type="entry name" value="Cyclin-like_sf"/>
</dbReference>
<dbReference type="InterPro" id="IPR002720">
    <property type="entry name" value="RB_A"/>
</dbReference>
<dbReference type="InterPro" id="IPR002719">
    <property type="entry name" value="RB_B"/>
</dbReference>
<dbReference type="InterPro" id="IPR015030">
    <property type="entry name" value="RB_C"/>
</dbReference>
<dbReference type="InterPro" id="IPR028309">
    <property type="entry name" value="RB_fam"/>
</dbReference>
<dbReference type="InterPro" id="IPR024599">
    <property type="entry name" value="RB_N"/>
</dbReference>
<dbReference type="PANTHER" id="PTHR13742:SF17">
    <property type="entry name" value="RE32990P-RELATED"/>
    <property type="match status" value="1"/>
</dbReference>
<dbReference type="PANTHER" id="PTHR13742">
    <property type="entry name" value="RETINOBLASTOMA-ASSOCIATED PROTEIN RB -RELATED"/>
    <property type="match status" value="1"/>
</dbReference>
<dbReference type="Pfam" id="PF11934">
    <property type="entry name" value="DUF3452"/>
    <property type="match status" value="1"/>
</dbReference>
<dbReference type="Pfam" id="PF01858">
    <property type="entry name" value="RB_A"/>
    <property type="match status" value="1"/>
</dbReference>
<dbReference type="Pfam" id="PF01857">
    <property type="entry name" value="RB_B"/>
    <property type="match status" value="1"/>
</dbReference>
<dbReference type="SMART" id="SM01367">
    <property type="entry name" value="DUF3452"/>
    <property type="match status" value="1"/>
</dbReference>
<dbReference type="SMART" id="SM01368">
    <property type="entry name" value="RB_A"/>
    <property type="match status" value="1"/>
</dbReference>
<dbReference type="SMART" id="SM01369">
    <property type="entry name" value="Rb_C"/>
    <property type="match status" value="1"/>
</dbReference>
<dbReference type="SUPFAM" id="SSF47954">
    <property type="entry name" value="Cyclin-like"/>
    <property type="match status" value="2"/>
</dbReference>
<proteinExistence type="evidence at transcript level"/>
<comment type="function">
    <text evidence="1">Regulator of biological processes that recruits a histone deacetylase to control gene transcription. May play a role in the entry into mitosis, negatively regulating the cell proliferation. Formation of stable complexes with geminiviridae replication-associated proteins may create a cellular environment which favors viral DNA replication (By similarity).</text>
</comment>
<comment type="subcellular location">
    <subcellularLocation>
        <location evidence="1">Nucleus</location>
    </subcellularLocation>
</comment>
<comment type="similarity">
    <text evidence="3">Belongs to the retinoblastoma protein (RB) family.</text>
</comment>
<evidence type="ECO:0000250" key="1"/>
<evidence type="ECO:0000256" key="2">
    <source>
        <dbReference type="SAM" id="MobiDB-lite"/>
    </source>
</evidence>
<evidence type="ECO:0000305" key="3"/>
<reference key="1">
    <citation type="journal article" date="2007" name="J. Exp. Bot.">
        <title>Dicot and monocot plants differ in retinoblastoma-related protein subfamilies.</title>
        <authorList>
            <person name="Lendvai A."/>
            <person name="Pettko-Szandtner A."/>
            <person name="Csordas-Toth E."/>
            <person name="Miskolczi P."/>
            <person name="Horvath G.V."/>
            <person name="Gyoergyey J."/>
            <person name="Dudits D."/>
        </authorList>
    </citation>
    <scope>NUCLEOTIDE SEQUENCE [MRNA]</scope>
    <scope>GENE FAMILY</scope>
    <scope>NOMENCLATURE</scope>
    <source>
        <strain>cv. CY-45</strain>
    </source>
</reference>
<organism>
    <name type="scientific">Triticum aestivum</name>
    <name type="common">Wheat</name>
    <dbReference type="NCBI Taxonomy" id="4565"/>
    <lineage>
        <taxon>Eukaryota</taxon>
        <taxon>Viridiplantae</taxon>
        <taxon>Streptophyta</taxon>
        <taxon>Embryophyta</taxon>
        <taxon>Tracheophyta</taxon>
        <taxon>Spermatophyta</taxon>
        <taxon>Magnoliopsida</taxon>
        <taxon>Liliopsida</taxon>
        <taxon>Poales</taxon>
        <taxon>Poaceae</taxon>
        <taxon>BOP clade</taxon>
        <taxon>Pooideae</taxon>
        <taxon>Triticodae</taxon>
        <taxon>Triticeae</taxon>
        <taxon>Triticinae</taxon>
        <taxon>Triticum</taxon>
    </lineage>
</organism>
<sequence length="957" mass="106054">MQLFKETKIILLSSMSSLGSGSPEEIERSWCACVLYCVSKLGNAGKAKEDRGITLRQILRAFDLKIVDFFKEMPQFCIKVGFILTGLYGSDWEKRLELQELQANLVHLCSLGRHYRRAYQELFLLNDGKPANNSSELNVQQASEYYDFGWLLFLVLRNQASSAVKNLLTSTTELVSVLAVLIIHIPVRLRNFSIEDSSCFAKKSDKGVNLIASLCERYLTSEDELSKALQKTNILIKDILKKKPCSDVSECQQGSLSFIDPEGLTFFKNFLEEDSLKSSLQVLEKEYVNGLDTKGELDARMFANEEDSLLGSGSLSGGALKLPGTKRKYDDVMASPTKSTASRAPMSPPRFCPSPNGNSFCNSKMAPFTPVSTAMTTAKWLRSTISPLPSKPSGELLRFFSACDKDVTDDITCRAAIILGAIFTGSSFGERMCTSLRNTSGMDAIWTEQRKMEALKLYYRVLESMCRAESQILSGSNLTSLLSNERFHRCMIACSAELVLATHKTVTMMFPAVLEKTGITAFDLSKVIESFVRHEDSLPRELKRHLNSLEERLLESMAWEKGSSMYNSLIVARPTLSAEINRLGLLAEPMPSLDAIAVHHDISLGGLPPLPFHKQPDKDEVRSPKRACTERRNVLVDNSFRSPVKDAIKSKFLPPLQSAFASPTRPNPAAGGETCAETGIGVFLSKITKLAAIRIKCLCERLQLSQQILERVYSLVQQIISQQTALFFNRHIDQIILCCIYGVAKISQLALTFKEIIFSYRKQSQCKPQVFRSVYVNWPSRSRSGKIGEDHVDIITFYNEVFIPTVKPLLVDLGPGTSPNRNNEPKSGGDAASFPESPRLSRFPNLPDMSPKKVSATHNVYVSPLRSSKMDTLLSPSSKSYYACVGESTHAFQSPSKDLNAINTRLNSGKKVNGRLNFDVVSDLVVARSLSDQNGSSAAAMAVFGTKTPVKGEQQDP</sequence>
<gene>
    <name type="primary">RBR1</name>
</gene>